<organism>
    <name type="scientific">Jonesia denitrificans (strain ATCC 14870 / DSM 20603 / BCRC 15368 / CIP 55.134 / JCM 11481 / NBRC 15587 / NCTC 10816 / Prevot 55134)</name>
    <name type="common">Listeria denitrificans</name>
    <dbReference type="NCBI Taxonomy" id="471856"/>
    <lineage>
        <taxon>Bacteria</taxon>
        <taxon>Bacillati</taxon>
        <taxon>Actinomycetota</taxon>
        <taxon>Actinomycetes</taxon>
        <taxon>Micrococcales</taxon>
        <taxon>Jonesiaceae</taxon>
        <taxon>Jonesia</taxon>
    </lineage>
</organism>
<dbReference type="EC" id="2.4.1.250" evidence="1"/>
<dbReference type="EMBL" id="CP001706">
    <property type="protein sequence ID" value="ACV09725.1"/>
    <property type="molecule type" value="Genomic_DNA"/>
</dbReference>
<dbReference type="RefSeq" id="WP_015772353.1">
    <property type="nucleotide sequence ID" value="NC_013174.1"/>
</dbReference>
<dbReference type="SMR" id="C7R101"/>
<dbReference type="STRING" id="471856.Jden_2087"/>
<dbReference type="CAZy" id="GT4">
    <property type="family name" value="Glycosyltransferase Family 4"/>
</dbReference>
<dbReference type="KEGG" id="jde:Jden_2087"/>
<dbReference type="eggNOG" id="COG0297">
    <property type="taxonomic scope" value="Bacteria"/>
</dbReference>
<dbReference type="HOGENOM" id="CLU_009583_2_3_11"/>
<dbReference type="OrthoDB" id="9810929at2"/>
<dbReference type="Proteomes" id="UP000000628">
    <property type="component" value="Chromosome"/>
</dbReference>
<dbReference type="GO" id="GO:0008375">
    <property type="term" value="F:acetylglucosaminyltransferase activity"/>
    <property type="evidence" value="ECO:0007669"/>
    <property type="project" value="UniProtKB-UniRule"/>
</dbReference>
<dbReference type="GO" id="GO:0102710">
    <property type="term" value="F:D-inositol-3-phosphate glycosyltransferase activity"/>
    <property type="evidence" value="ECO:0007669"/>
    <property type="project" value="UniProtKB-EC"/>
</dbReference>
<dbReference type="GO" id="GO:0000287">
    <property type="term" value="F:magnesium ion binding"/>
    <property type="evidence" value="ECO:0007669"/>
    <property type="project" value="UniProtKB-UniRule"/>
</dbReference>
<dbReference type="GO" id="GO:0010125">
    <property type="term" value="P:mycothiol biosynthetic process"/>
    <property type="evidence" value="ECO:0007669"/>
    <property type="project" value="UniProtKB-UniRule"/>
</dbReference>
<dbReference type="Gene3D" id="3.40.50.2000">
    <property type="entry name" value="Glycogen Phosphorylase B"/>
    <property type="match status" value="2"/>
</dbReference>
<dbReference type="HAMAP" id="MF_01695">
    <property type="entry name" value="MshA"/>
    <property type="match status" value="1"/>
</dbReference>
<dbReference type="InterPro" id="IPR001296">
    <property type="entry name" value="Glyco_trans_1"/>
</dbReference>
<dbReference type="InterPro" id="IPR028098">
    <property type="entry name" value="Glyco_trans_4-like_N"/>
</dbReference>
<dbReference type="InterPro" id="IPR050194">
    <property type="entry name" value="Glycosyltransferase_grp1"/>
</dbReference>
<dbReference type="InterPro" id="IPR017814">
    <property type="entry name" value="Mycothiol_biosynthesis_MshA"/>
</dbReference>
<dbReference type="NCBIfam" id="TIGR03449">
    <property type="entry name" value="mycothiol_MshA"/>
    <property type="match status" value="1"/>
</dbReference>
<dbReference type="PANTHER" id="PTHR45947">
    <property type="entry name" value="SULFOQUINOVOSYL TRANSFERASE SQD2"/>
    <property type="match status" value="1"/>
</dbReference>
<dbReference type="PANTHER" id="PTHR45947:SF3">
    <property type="entry name" value="SULFOQUINOVOSYL TRANSFERASE SQD2"/>
    <property type="match status" value="1"/>
</dbReference>
<dbReference type="Pfam" id="PF13579">
    <property type="entry name" value="Glyco_trans_4_4"/>
    <property type="match status" value="1"/>
</dbReference>
<dbReference type="Pfam" id="PF00534">
    <property type="entry name" value="Glycos_transf_1"/>
    <property type="match status" value="1"/>
</dbReference>
<dbReference type="SUPFAM" id="SSF53756">
    <property type="entry name" value="UDP-Glycosyltransferase/glycogen phosphorylase"/>
    <property type="match status" value="1"/>
</dbReference>
<name>MSHA_JONDD</name>
<keyword id="KW-0328">Glycosyltransferase</keyword>
<keyword id="KW-0460">Magnesium</keyword>
<keyword id="KW-0479">Metal-binding</keyword>
<keyword id="KW-1185">Reference proteome</keyword>
<keyword id="KW-0808">Transferase</keyword>
<feature type="chain" id="PRO_0000400127" description="D-inositol 3-phosphate glycosyltransferase">
    <location>
        <begin position="1"/>
        <end position="424"/>
    </location>
</feature>
<feature type="binding site" evidence="1">
    <location>
        <position position="16"/>
    </location>
    <ligand>
        <name>1D-myo-inositol 3-phosphate</name>
        <dbReference type="ChEBI" id="CHEBI:58401"/>
    </ligand>
</feature>
<feature type="binding site" evidence="1">
    <location>
        <begin position="22"/>
        <end position="23"/>
    </location>
    <ligand>
        <name>UDP-N-acetyl-alpha-D-glucosamine</name>
        <dbReference type="ChEBI" id="CHEBI:57705"/>
    </ligand>
</feature>
<feature type="binding site" evidence="1">
    <location>
        <begin position="27"/>
        <end position="32"/>
    </location>
    <ligand>
        <name>1D-myo-inositol 3-phosphate</name>
        <dbReference type="ChEBI" id="CHEBI:58401"/>
    </ligand>
</feature>
<feature type="binding site" evidence="1">
    <location>
        <position position="30"/>
    </location>
    <ligand>
        <name>UDP-N-acetyl-alpha-D-glucosamine</name>
        <dbReference type="ChEBI" id="CHEBI:57705"/>
    </ligand>
</feature>
<feature type="binding site" evidence="1">
    <location>
        <position position="85"/>
    </location>
    <ligand>
        <name>1D-myo-inositol 3-phosphate</name>
        <dbReference type="ChEBI" id="CHEBI:58401"/>
    </ligand>
</feature>
<feature type="binding site" evidence="1">
    <location>
        <position position="118"/>
    </location>
    <ligand>
        <name>1D-myo-inositol 3-phosphate</name>
        <dbReference type="ChEBI" id="CHEBI:58401"/>
    </ligand>
</feature>
<feature type="binding site" evidence="1">
    <location>
        <position position="142"/>
    </location>
    <ligand>
        <name>1D-myo-inositol 3-phosphate</name>
        <dbReference type="ChEBI" id="CHEBI:58401"/>
    </ligand>
</feature>
<feature type="binding site" evidence="1">
    <location>
        <position position="162"/>
    </location>
    <ligand>
        <name>1D-myo-inositol 3-phosphate</name>
        <dbReference type="ChEBI" id="CHEBI:58401"/>
    </ligand>
</feature>
<feature type="binding site" evidence="1">
    <location>
        <position position="240"/>
    </location>
    <ligand>
        <name>UDP-N-acetyl-alpha-D-glucosamine</name>
        <dbReference type="ChEBI" id="CHEBI:57705"/>
    </ligand>
</feature>
<feature type="binding site" evidence="1">
    <location>
        <position position="245"/>
    </location>
    <ligand>
        <name>UDP-N-acetyl-alpha-D-glucosamine</name>
        <dbReference type="ChEBI" id="CHEBI:57705"/>
    </ligand>
</feature>
<feature type="binding site" evidence="1">
    <location>
        <position position="313"/>
    </location>
    <ligand>
        <name>Mg(2+)</name>
        <dbReference type="ChEBI" id="CHEBI:18420"/>
    </ligand>
</feature>
<feature type="binding site" evidence="1">
    <location>
        <position position="314"/>
    </location>
    <ligand>
        <name>Mg(2+)</name>
        <dbReference type="ChEBI" id="CHEBI:18420"/>
    </ligand>
</feature>
<feature type="binding site" evidence="1">
    <location>
        <position position="316"/>
    </location>
    <ligand>
        <name>Mg(2+)</name>
        <dbReference type="ChEBI" id="CHEBI:18420"/>
    </ligand>
</feature>
<feature type="binding site" evidence="1">
    <location>
        <position position="326"/>
    </location>
    <ligand>
        <name>UDP-N-acetyl-alpha-D-glucosamine</name>
        <dbReference type="ChEBI" id="CHEBI:57705"/>
    </ligand>
</feature>
<feature type="binding site" evidence="1">
    <location>
        <position position="334"/>
    </location>
    <ligand>
        <name>UDP-N-acetyl-alpha-D-glucosamine</name>
        <dbReference type="ChEBI" id="CHEBI:57705"/>
    </ligand>
</feature>
<feature type="binding site" evidence="1">
    <location>
        <position position="340"/>
    </location>
    <ligand>
        <name>Mg(2+)</name>
        <dbReference type="ChEBI" id="CHEBI:18420"/>
    </ligand>
</feature>
<proteinExistence type="inferred from homology"/>
<gene>
    <name evidence="1" type="primary">mshA</name>
    <name type="ordered locus">Jden_2087</name>
</gene>
<sequence>MTVSHPAHRVAMLCVHTSPLAQPGTGDAGGMNVYVVELARAMAAQGTEVEIFTRRTTANQPDVVEVDDGVLVRHVTAGPYEGLDKNDLPGQLCYFTQGVLRTEAARQPGWYDIVHSHYWLSGQAGWLAADRWNVPLVHTMHTMARVKNAQLAPGDAPEPRARIIGEEQVVEQSAALVANTDKEAHELHTLYAADPEKVHVVAPGVDLAAFTPPIDDHQRQAERVALGLAPEGDVIVFAGRIQPLKGPDVLVDALALLRSQQPDRPMPTLVIIGGPSGRPAALGELRARVFQRGVAQHVRFVPPADRPTLAQWMRVADYVAMPSRNESFGLVAIEAQACGTPVIAADVGGLTTAVAHKKSGLLVPDHRPQTWAGVLQVALGDTQLRESLRAGARRHAQQFTWDHTATDMLAVYERTRVAASVNTG</sequence>
<evidence type="ECO:0000255" key="1">
    <source>
        <dbReference type="HAMAP-Rule" id="MF_01695"/>
    </source>
</evidence>
<accession>C7R101</accession>
<reference key="1">
    <citation type="journal article" date="2009" name="Stand. Genomic Sci.">
        <title>Complete genome sequence of Jonesia denitrificans type strain (Prevot 55134).</title>
        <authorList>
            <person name="Pukall R."/>
            <person name="Gehrich-Schroter G."/>
            <person name="Lapidus A."/>
            <person name="Nolan M."/>
            <person name="Glavina Del Rio T."/>
            <person name="Lucas S."/>
            <person name="Chen F."/>
            <person name="Tice H."/>
            <person name="Pitluck S."/>
            <person name="Cheng J.F."/>
            <person name="Copeland A."/>
            <person name="Saunders E."/>
            <person name="Brettin T."/>
            <person name="Detter J.C."/>
            <person name="Bruce D."/>
            <person name="Goodwin L."/>
            <person name="Pati A."/>
            <person name="Ivanova N."/>
            <person name="Mavromatis K."/>
            <person name="Ovchinnikova G."/>
            <person name="Chen A."/>
            <person name="Palaniappan K."/>
            <person name="Land M."/>
            <person name="Hauser L."/>
            <person name="Chang Y.J."/>
            <person name="Jeffries C.D."/>
            <person name="Chain P."/>
            <person name="Goker M."/>
            <person name="Bristow J."/>
            <person name="Eisen J.A."/>
            <person name="Markowitz V."/>
            <person name="Hugenholtz P."/>
            <person name="Kyrpides N.C."/>
            <person name="Klenk H.P."/>
            <person name="Han C."/>
        </authorList>
    </citation>
    <scope>NUCLEOTIDE SEQUENCE [LARGE SCALE GENOMIC DNA]</scope>
    <source>
        <strain>ATCC 14870 / DSM 20603 / BCRC 15368 / CIP 55.134 / JCM 11481 / NBRC 15587 / NCTC 10816 / Prevot 55134</strain>
    </source>
</reference>
<comment type="function">
    <text evidence="1">Catalyzes the transfer of a N-acetyl-glucosamine moiety to 1D-myo-inositol 3-phosphate to produce 1D-myo-inositol 2-acetamido-2-deoxy-glucopyranoside 3-phosphate in the mycothiol biosynthesis pathway.</text>
</comment>
<comment type="catalytic activity">
    <reaction evidence="1">
        <text>1D-myo-inositol 3-phosphate + UDP-N-acetyl-alpha-D-glucosamine = 1D-myo-inositol 2-acetamido-2-deoxy-alpha-D-glucopyranoside 3-phosphate + UDP + H(+)</text>
        <dbReference type="Rhea" id="RHEA:26188"/>
        <dbReference type="ChEBI" id="CHEBI:15378"/>
        <dbReference type="ChEBI" id="CHEBI:57705"/>
        <dbReference type="ChEBI" id="CHEBI:58223"/>
        <dbReference type="ChEBI" id="CHEBI:58401"/>
        <dbReference type="ChEBI" id="CHEBI:58892"/>
        <dbReference type="EC" id="2.4.1.250"/>
    </reaction>
</comment>
<comment type="subunit">
    <text evidence="1">Homodimer.</text>
</comment>
<comment type="similarity">
    <text evidence="1">Belongs to the glycosyltransferase group 1 family. MshA subfamily.</text>
</comment>
<protein>
    <recommendedName>
        <fullName>D-inositol 3-phosphate glycosyltransferase</fullName>
        <ecNumber evidence="1">2.4.1.250</ecNumber>
    </recommendedName>
    <alternativeName>
        <fullName evidence="1">N-acetylglucosamine-inositol-phosphate N-acetylglucosaminyltransferase</fullName>
        <shortName evidence="1">GlcNAc-Ins-P N-acetylglucosaminyltransferase</shortName>
    </alternativeName>
</protein>